<gene>
    <name evidence="1" type="primary">gcvH</name>
    <name type="ordered locus">ECSE_3167</name>
</gene>
<keyword id="KW-0450">Lipoyl</keyword>
<proteinExistence type="inferred from homology"/>
<evidence type="ECO:0000255" key="1">
    <source>
        <dbReference type="HAMAP-Rule" id="MF_00272"/>
    </source>
</evidence>
<evidence type="ECO:0000255" key="2">
    <source>
        <dbReference type="PROSITE-ProRule" id="PRU01066"/>
    </source>
</evidence>
<comment type="function">
    <text evidence="1">The glycine cleavage system catalyzes the degradation of glycine. The H protein shuttles the methylamine group of glycine from the P protein to the T protein.</text>
</comment>
<comment type="cofactor">
    <cofactor evidence="1">
        <name>(R)-lipoate</name>
        <dbReference type="ChEBI" id="CHEBI:83088"/>
    </cofactor>
    <text evidence="1">Binds 1 lipoyl cofactor covalently.</text>
</comment>
<comment type="subunit">
    <text evidence="1">The glycine cleavage system is composed of four proteins: P, T, L and H.</text>
</comment>
<comment type="similarity">
    <text evidence="1">Belongs to the GcvH family.</text>
</comment>
<feature type="chain" id="PRO_1000114519" description="Glycine cleavage system H protein">
    <location>
        <begin position="1"/>
        <end position="129"/>
    </location>
</feature>
<feature type="domain" description="Lipoyl-binding" evidence="2">
    <location>
        <begin position="24"/>
        <end position="106"/>
    </location>
</feature>
<feature type="modified residue" description="N6-lipoyllysine" evidence="1">
    <location>
        <position position="65"/>
    </location>
</feature>
<organism>
    <name type="scientific">Escherichia coli (strain SE11)</name>
    <dbReference type="NCBI Taxonomy" id="409438"/>
    <lineage>
        <taxon>Bacteria</taxon>
        <taxon>Pseudomonadati</taxon>
        <taxon>Pseudomonadota</taxon>
        <taxon>Gammaproteobacteria</taxon>
        <taxon>Enterobacterales</taxon>
        <taxon>Enterobacteriaceae</taxon>
        <taxon>Escherichia</taxon>
    </lineage>
</organism>
<dbReference type="EMBL" id="AP009240">
    <property type="protein sequence ID" value="BAG78691.1"/>
    <property type="molecule type" value="Genomic_DNA"/>
</dbReference>
<dbReference type="RefSeq" id="WP_001295377.1">
    <property type="nucleotide sequence ID" value="NC_011415.1"/>
</dbReference>
<dbReference type="SMR" id="B6I737"/>
<dbReference type="GeneID" id="93779098"/>
<dbReference type="KEGG" id="ecy:ECSE_3167"/>
<dbReference type="HOGENOM" id="CLU_097408_2_1_6"/>
<dbReference type="Proteomes" id="UP000008199">
    <property type="component" value="Chromosome"/>
</dbReference>
<dbReference type="GO" id="GO:0005829">
    <property type="term" value="C:cytosol"/>
    <property type="evidence" value="ECO:0007669"/>
    <property type="project" value="TreeGrafter"/>
</dbReference>
<dbReference type="GO" id="GO:0005960">
    <property type="term" value="C:glycine cleavage complex"/>
    <property type="evidence" value="ECO:0007669"/>
    <property type="project" value="InterPro"/>
</dbReference>
<dbReference type="GO" id="GO:0019464">
    <property type="term" value="P:glycine decarboxylation via glycine cleavage system"/>
    <property type="evidence" value="ECO:0007669"/>
    <property type="project" value="UniProtKB-UniRule"/>
</dbReference>
<dbReference type="CDD" id="cd06848">
    <property type="entry name" value="GCS_H"/>
    <property type="match status" value="1"/>
</dbReference>
<dbReference type="FunFam" id="2.40.50.100:FF:000011">
    <property type="entry name" value="Glycine cleavage system H protein"/>
    <property type="match status" value="1"/>
</dbReference>
<dbReference type="Gene3D" id="2.40.50.100">
    <property type="match status" value="1"/>
</dbReference>
<dbReference type="HAMAP" id="MF_00272">
    <property type="entry name" value="GcvH"/>
    <property type="match status" value="1"/>
</dbReference>
<dbReference type="InterPro" id="IPR003016">
    <property type="entry name" value="2-oxoA_DH_lipoyl-BS"/>
</dbReference>
<dbReference type="InterPro" id="IPR000089">
    <property type="entry name" value="Biotin_lipoyl"/>
</dbReference>
<dbReference type="InterPro" id="IPR002930">
    <property type="entry name" value="GCV_H"/>
</dbReference>
<dbReference type="InterPro" id="IPR033753">
    <property type="entry name" value="GCV_H/Fam206"/>
</dbReference>
<dbReference type="InterPro" id="IPR017453">
    <property type="entry name" value="GCV_H_sub"/>
</dbReference>
<dbReference type="InterPro" id="IPR011053">
    <property type="entry name" value="Single_hybrid_motif"/>
</dbReference>
<dbReference type="NCBIfam" id="TIGR00527">
    <property type="entry name" value="gcvH"/>
    <property type="match status" value="1"/>
</dbReference>
<dbReference type="NCBIfam" id="NF002270">
    <property type="entry name" value="PRK01202.1"/>
    <property type="match status" value="1"/>
</dbReference>
<dbReference type="PANTHER" id="PTHR11715">
    <property type="entry name" value="GLYCINE CLEAVAGE SYSTEM H PROTEIN"/>
    <property type="match status" value="1"/>
</dbReference>
<dbReference type="PANTHER" id="PTHR11715:SF3">
    <property type="entry name" value="GLYCINE CLEAVAGE SYSTEM H PROTEIN-RELATED"/>
    <property type="match status" value="1"/>
</dbReference>
<dbReference type="Pfam" id="PF01597">
    <property type="entry name" value="GCV_H"/>
    <property type="match status" value="1"/>
</dbReference>
<dbReference type="SUPFAM" id="SSF51230">
    <property type="entry name" value="Single hybrid motif"/>
    <property type="match status" value="1"/>
</dbReference>
<dbReference type="PROSITE" id="PS50968">
    <property type="entry name" value="BIOTINYL_LIPOYL"/>
    <property type="match status" value="1"/>
</dbReference>
<dbReference type="PROSITE" id="PS00189">
    <property type="entry name" value="LIPOYL"/>
    <property type="match status" value="1"/>
</dbReference>
<protein>
    <recommendedName>
        <fullName evidence="1">Glycine cleavage system H protein</fullName>
    </recommendedName>
</protein>
<name>GCSH_ECOSE</name>
<accession>B6I737</accession>
<reference key="1">
    <citation type="journal article" date="2008" name="DNA Res.">
        <title>Complete genome sequence and comparative analysis of the wild-type commensal Escherichia coli strain SE11 isolated from a healthy adult.</title>
        <authorList>
            <person name="Oshima K."/>
            <person name="Toh H."/>
            <person name="Ogura Y."/>
            <person name="Sasamoto H."/>
            <person name="Morita H."/>
            <person name="Park S.-H."/>
            <person name="Ooka T."/>
            <person name="Iyoda S."/>
            <person name="Taylor T.D."/>
            <person name="Hayashi T."/>
            <person name="Itoh K."/>
            <person name="Hattori M."/>
        </authorList>
    </citation>
    <scope>NUCLEOTIDE SEQUENCE [LARGE SCALE GENOMIC DNA]</scope>
    <source>
        <strain>SE11</strain>
    </source>
</reference>
<sequence length="129" mass="13811">MSNVPAELKYSKEHEWLRKEADGTYTVGITEHAQELLGDMVFVDLPEVGATVSAGDDCAVAESVKAASDIYAPVSGEIVAVNDALSDSPELVNSEPYAGGWIFKIKASDESELESLLDATAYEALLEDE</sequence>